<reference key="1">
    <citation type="journal article" date="1996" name="DNA Res.">
        <title>Sequence analysis of the genome of the unicellular cyanobacterium Synechocystis sp. strain PCC6803. II. Sequence determination of the entire genome and assignment of potential protein-coding regions.</title>
        <authorList>
            <person name="Kaneko T."/>
            <person name="Sato S."/>
            <person name="Kotani H."/>
            <person name="Tanaka A."/>
            <person name="Asamizu E."/>
            <person name="Nakamura Y."/>
            <person name="Miyajima N."/>
            <person name="Hirosawa M."/>
            <person name="Sugiura M."/>
            <person name="Sasamoto S."/>
            <person name="Kimura T."/>
            <person name="Hosouchi T."/>
            <person name="Matsuno A."/>
            <person name="Muraki A."/>
            <person name="Nakazaki N."/>
            <person name="Naruo K."/>
            <person name="Okumura S."/>
            <person name="Shimpo S."/>
            <person name="Takeuchi C."/>
            <person name="Wada T."/>
            <person name="Watanabe A."/>
            <person name="Yamada M."/>
            <person name="Yasuda M."/>
            <person name="Tabata S."/>
        </authorList>
    </citation>
    <scope>NUCLEOTIDE SEQUENCE [LARGE SCALE GENOMIC DNA]</scope>
    <source>
        <strain>ATCC 27184 / PCC 6803 / Kazusa</strain>
    </source>
</reference>
<reference key="2">
    <citation type="journal article" date="2001" name="FEBS Lett.">
        <title>NADPH-dependent glutathione peroxidase-like proteins (Gpx-1, Gpx-2) reduce unsaturated fatty acid hydroperoxides in Synechocystis PCC 6803.</title>
        <authorList>
            <person name="Gaber A."/>
            <person name="Tamoi M."/>
            <person name="Takeda T."/>
            <person name="Nakano Y."/>
            <person name="Shigeoka S."/>
        </authorList>
    </citation>
    <scope>SUBUNIT</scope>
    <scope>CATALYTIC ACTIVITY</scope>
    <scope>BIOPHYSICOCHEMICAL PROPERTIES</scope>
    <scope>ACTIVITY REGULATION</scope>
</reference>
<reference key="3">
    <citation type="journal article" date="1997" name="Electrophoresis">
        <title>Towards a proteome project of cyanobacterium Synechocystis sp. strain PCC6803: linking 130 protein spots with their respective genes.</title>
        <authorList>
            <person name="Sazuka T."/>
            <person name="Ohara O."/>
        </authorList>
    </citation>
    <scope>PROTEIN SEQUENCE OF 1-16</scope>
</reference>
<reference key="4">
    <citation type="journal article" date="2004" name="Plant Physiol.">
        <title>Induction and functional analysis of two reduced nicotinamide adenine dinucleotide phosphate-dependent glutathione peroxidase-like proteins in Synechocystis PCC 6803 during the progression of oxidative stress.</title>
        <authorList>
            <person name="Gaber A."/>
            <person name="Yoshimura K."/>
            <person name="Tamoi M."/>
            <person name="Takeda T."/>
            <person name="Nakano Y."/>
            <person name="Shigeoka S."/>
        </authorList>
    </citation>
    <scope>INDUCTION</scope>
    <scope>FUNCTION</scope>
</reference>
<proteinExistence type="evidence at protein level"/>
<feature type="initiator methionine" description="Removed" evidence="4">
    <location>
        <position position="1"/>
    </location>
</feature>
<feature type="chain" id="PRO_0000424245" description="Hydroperoxy fatty acid reductase Gpx2">
    <location>
        <begin position="2"/>
        <end position="154"/>
    </location>
</feature>
<feature type="active site" evidence="1">
    <location>
        <position position="34"/>
    </location>
</feature>
<feature type="sequence conflict" description="In Ref. 3; AA sequence." evidence="5" ref="3">
    <original>S</original>
    <variation>E</variation>
    <location>
        <position position="6"/>
    </location>
</feature>
<feature type="sequence conflict" description="In Ref. 3; AA sequence." evidence="5" ref="3">
    <original>P</original>
    <variation>D</variation>
    <location>
        <position position="14"/>
    </location>
</feature>
<dbReference type="EC" id="1.11.1.22"/>
<dbReference type="EMBL" id="BA000022">
    <property type="protein sequence ID" value="BAA17881.1"/>
    <property type="molecule type" value="Genomic_DNA"/>
</dbReference>
<dbReference type="PIR" id="S75019">
    <property type="entry name" value="S75019"/>
</dbReference>
<dbReference type="SMR" id="P73824"/>
<dbReference type="IntAct" id="P73824">
    <property type="interactions" value="8"/>
</dbReference>
<dbReference type="STRING" id="1148.gene:10498750"/>
<dbReference type="PaxDb" id="1148-1652964"/>
<dbReference type="EnsemblBacteria" id="BAA17881">
    <property type="protein sequence ID" value="BAA17881"/>
    <property type="gene ID" value="BAA17881"/>
</dbReference>
<dbReference type="KEGG" id="syn:slr1992"/>
<dbReference type="eggNOG" id="COG0386">
    <property type="taxonomic scope" value="Bacteria"/>
</dbReference>
<dbReference type="InParanoid" id="P73824"/>
<dbReference type="PhylomeDB" id="P73824"/>
<dbReference type="BioCyc" id="MetaCyc:MONOMER-17843"/>
<dbReference type="Proteomes" id="UP000001425">
    <property type="component" value="Chromosome"/>
</dbReference>
<dbReference type="GO" id="GO:0004601">
    <property type="term" value="F:peroxidase activity"/>
    <property type="evidence" value="ECO:0007669"/>
    <property type="project" value="UniProtKB-KW"/>
</dbReference>
<dbReference type="GO" id="GO:0034599">
    <property type="term" value="P:cellular response to oxidative stress"/>
    <property type="evidence" value="ECO:0000318"/>
    <property type="project" value="GO_Central"/>
</dbReference>
<dbReference type="CDD" id="cd00340">
    <property type="entry name" value="GSH_Peroxidase"/>
    <property type="match status" value="1"/>
</dbReference>
<dbReference type="Gene3D" id="3.40.30.10">
    <property type="entry name" value="Glutaredoxin"/>
    <property type="match status" value="1"/>
</dbReference>
<dbReference type="InterPro" id="IPR000889">
    <property type="entry name" value="Glutathione_peroxidase"/>
</dbReference>
<dbReference type="InterPro" id="IPR029759">
    <property type="entry name" value="GPX_AS"/>
</dbReference>
<dbReference type="InterPro" id="IPR036249">
    <property type="entry name" value="Thioredoxin-like_sf"/>
</dbReference>
<dbReference type="PANTHER" id="PTHR11592">
    <property type="entry name" value="GLUTATHIONE PEROXIDASE"/>
    <property type="match status" value="1"/>
</dbReference>
<dbReference type="PANTHER" id="PTHR11592:SF78">
    <property type="entry name" value="GLUTATHIONE PEROXIDASE"/>
    <property type="match status" value="1"/>
</dbReference>
<dbReference type="Pfam" id="PF00255">
    <property type="entry name" value="GSHPx"/>
    <property type="match status" value="1"/>
</dbReference>
<dbReference type="PIRSF" id="PIRSF000303">
    <property type="entry name" value="Glutathion_perox"/>
    <property type="match status" value="1"/>
</dbReference>
<dbReference type="PRINTS" id="PR01011">
    <property type="entry name" value="GLUTPROXDASE"/>
</dbReference>
<dbReference type="SUPFAM" id="SSF52833">
    <property type="entry name" value="Thioredoxin-like"/>
    <property type="match status" value="1"/>
</dbReference>
<dbReference type="PROSITE" id="PS00460">
    <property type="entry name" value="GLUTATHIONE_PEROXID_1"/>
    <property type="match status" value="1"/>
</dbReference>
<dbReference type="PROSITE" id="PS51355">
    <property type="entry name" value="GLUTATHIONE_PEROXID_3"/>
    <property type="match status" value="1"/>
</dbReference>
<organism>
    <name type="scientific">Synechocystis sp. (strain ATCC 27184 / PCC 6803 / Kazusa)</name>
    <dbReference type="NCBI Taxonomy" id="1111708"/>
    <lineage>
        <taxon>Bacteria</taxon>
        <taxon>Bacillati</taxon>
        <taxon>Cyanobacteriota</taxon>
        <taxon>Cyanophyceae</taxon>
        <taxon>Synechococcales</taxon>
        <taxon>Merismopediaceae</taxon>
        <taxon>Synechocystis</taxon>
    </lineage>
</organism>
<sequence>MPLPTSLTTLDGTPLAPEVIADKVVLFVNVASKCGLTPQYSGLVALDKAYGEKGLVIIGVPCNQFGAQEPGSPEEIKDFTKTKYDVDFTLLEKQDVNGPNRSPLYQFLVGDGEDISWNFGKFLIGRDGQVVARFDPQTKPDDTNLKAAIEKALG</sequence>
<accession>P73824</accession>
<evidence type="ECO:0000250" key="1"/>
<evidence type="ECO:0000269" key="2">
    <source>
    </source>
</evidence>
<evidence type="ECO:0000269" key="3">
    <source>
    </source>
</evidence>
<evidence type="ECO:0000269" key="4">
    <source>
    </source>
</evidence>
<evidence type="ECO:0000305" key="5"/>
<name>GPX2_SYNY3</name>
<keyword id="KW-0903">Direct protein sequencing</keyword>
<keyword id="KW-0521">NADP</keyword>
<keyword id="KW-0560">Oxidoreductase</keyword>
<keyword id="KW-0575">Peroxidase</keyword>
<keyword id="KW-1185">Reference proteome</keyword>
<comment type="function">
    <text evidence="3">Hydroperoxy fatty acid reductase essential for the removal of lipid hydroperoxides under normal and stress conditions, leading to the protection of membrane integrity.</text>
</comment>
<comment type="catalytic activity">
    <reaction evidence="2">
        <text>a hydroperoxy polyunsaturated fatty acid + NADPH + H(+) = a hydroxy polyunsaturated fatty acid + NADP(+) + H2O</text>
        <dbReference type="Rhea" id="RHEA:50876"/>
        <dbReference type="ChEBI" id="CHEBI:15377"/>
        <dbReference type="ChEBI" id="CHEBI:15378"/>
        <dbReference type="ChEBI" id="CHEBI:57783"/>
        <dbReference type="ChEBI" id="CHEBI:58349"/>
        <dbReference type="ChEBI" id="CHEBI:131871"/>
        <dbReference type="ChEBI" id="CHEBI:134019"/>
        <dbReference type="EC" id="1.11.1.22"/>
    </reaction>
</comment>
<comment type="activity regulation">
    <text evidence="2">Mercaptosuccinate, pCMB, and nethylmaleimide act as inhibitors of the catalytic activity.</text>
</comment>
<comment type="biophysicochemical properties">
    <kinetics>
        <KM evidence="2">57.3 uM for NADPH</KM>
        <KM evidence="2">82.1 uM for alpha-linolenic acid hydroperoxide</KM>
    </kinetics>
    <phDependence>
        <text evidence="2">Optimum pH is 8.2.</text>
    </phDependence>
    <temperatureDependence>
        <text evidence="2">Optimum temperature is 37 degrees Celsius.</text>
    </temperatureDependence>
</comment>
<comment type="subunit">
    <text evidence="2">Monomer.</text>
</comment>
<comment type="induction">
    <text evidence="3">High light, methylviologen, and salt stress conditions increase the expression level.</text>
</comment>
<comment type="similarity">
    <text evidence="5">Belongs to the glutathione peroxidase family.</text>
</comment>
<protein>
    <recommendedName>
        <fullName>Hydroperoxy fatty acid reductase Gpx2</fullName>
        <ecNumber>1.11.1.22</ecNumber>
    </recommendedName>
</protein>
<gene>
    <name type="primary">gpx2</name>
    <name type="ordered locus">slr1992</name>
</gene>